<comment type="function">
    <text evidence="1">Presumably involved in the processing and regular turnover of intracellular proteins. Catalyzes the removal of unsubstituted N-terminal amino acids from various peptides.</text>
</comment>
<comment type="catalytic activity">
    <reaction evidence="1">
        <text>Release of an N-terminal amino acid, Xaa-|-Yaa-, in which Xaa is preferably Leu, but may be other amino acids including Pro although not Arg or Lys, and Yaa may be Pro. Amino acid amides and methyl esters are also readily hydrolyzed, but rates on arylamides are exceedingly low.</text>
        <dbReference type="EC" id="3.4.11.1"/>
    </reaction>
</comment>
<comment type="catalytic activity">
    <reaction evidence="1">
        <text>Release of an N-terminal amino acid, preferentially leucine, but not glutamic or aspartic acids.</text>
        <dbReference type="EC" id="3.4.11.10"/>
    </reaction>
</comment>
<comment type="cofactor">
    <cofactor evidence="1">
        <name>Mn(2+)</name>
        <dbReference type="ChEBI" id="CHEBI:29035"/>
    </cofactor>
    <text evidence="1">Binds 2 manganese ions per subunit.</text>
</comment>
<comment type="subcellular location">
    <subcellularLocation>
        <location evidence="1">Cytoplasm</location>
    </subcellularLocation>
</comment>
<comment type="similarity">
    <text evidence="1">Belongs to the peptidase M17 family.</text>
</comment>
<dbReference type="EC" id="3.4.11.1" evidence="1"/>
<dbReference type="EC" id="3.4.11.10" evidence="1"/>
<dbReference type="EMBL" id="CP001177">
    <property type="protein sequence ID" value="ACJ77580.1"/>
    <property type="molecule type" value="Genomic_DNA"/>
</dbReference>
<dbReference type="SMR" id="B7HUR5"/>
<dbReference type="MEROPS" id="M17.010"/>
<dbReference type="KEGG" id="bcr:BCAH187_A5066"/>
<dbReference type="HOGENOM" id="CLU_013734_6_0_9"/>
<dbReference type="Proteomes" id="UP000002214">
    <property type="component" value="Chromosome"/>
</dbReference>
<dbReference type="GO" id="GO:0005737">
    <property type="term" value="C:cytoplasm"/>
    <property type="evidence" value="ECO:0007669"/>
    <property type="project" value="UniProtKB-SubCell"/>
</dbReference>
<dbReference type="GO" id="GO:0030145">
    <property type="term" value="F:manganese ion binding"/>
    <property type="evidence" value="ECO:0007669"/>
    <property type="project" value="UniProtKB-UniRule"/>
</dbReference>
<dbReference type="GO" id="GO:0070006">
    <property type="term" value="F:metalloaminopeptidase activity"/>
    <property type="evidence" value="ECO:0007669"/>
    <property type="project" value="InterPro"/>
</dbReference>
<dbReference type="GO" id="GO:0006508">
    <property type="term" value="P:proteolysis"/>
    <property type="evidence" value="ECO:0007669"/>
    <property type="project" value="UniProtKB-KW"/>
</dbReference>
<dbReference type="CDD" id="cd00433">
    <property type="entry name" value="Peptidase_M17"/>
    <property type="match status" value="1"/>
</dbReference>
<dbReference type="Gene3D" id="3.40.220.10">
    <property type="entry name" value="Leucine Aminopeptidase, subunit E, domain 1"/>
    <property type="match status" value="1"/>
</dbReference>
<dbReference type="Gene3D" id="3.40.630.10">
    <property type="entry name" value="Zn peptidases"/>
    <property type="match status" value="1"/>
</dbReference>
<dbReference type="HAMAP" id="MF_00181">
    <property type="entry name" value="Cytosol_peptidase_M17"/>
    <property type="match status" value="1"/>
</dbReference>
<dbReference type="InterPro" id="IPR011356">
    <property type="entry name" value="Leucine_aapep/pepB"/>
</dbReference>
<dbReference type="InterPro" id="IPR043472">
    <property type="entry name" value="Macro_dom-like"/>
</dbReference>
<dbReference type="InterPro" id="IPR000819">
    <property type="entry name" value="Peptidase_M17_C"/>
</dbReference>
<dbReference type="InterPro" id="IPR023042">
    <property type="entry name" value="Peptidase_M17_leu_NH2_pept"/>
</dbReference>
<dbReference type="InterPro" id="IPR008283">
    <property type="entry name" value="Peptidase_M17_N"/>
</dbReference>
<dbReference type="NCBIfam" id="NF002073">
    <property type="entry name" value="PRK00913.1-2"/>
    <property type="match status" value="1"/>
</dbReference>
<dbReference type="NCBIfam" id="NF002074">
    <property type="entry name" value="PRK00913.1-4"/>
    <property type="match status" value="1"/>
</dbReference>
<dbReference type="NCBIfam" id="NF002083">
    <property type="entry name" value="PRK00913.3-5"/>
    <property type="match status" value="1"/>
</dbReference>
<dbReference type="PANTHER" id="PTHR11963:SF23">
    <property type="entry name" value="CYTOSOL AMINOPEPTIDASE"/>
    <property type="match status" value="1"/>
</dbReference>
<dbReference type="PANTHER" id="PTHR11963">
    <property type="entry name" value="LEUCINE AMINOPEPTIDASE-RELATED"/>
    <property type="match status" value="1"/>
</dbReference>
<dbReference type="Pfam" id="PF00883">
    <property type="entry name" value="Peptidase_M17"/>
    <property type="match status" value="1"/>
</dbReference>
<dbReference type="Pfam" id="PF02789">
    <property type="entry name" value="Peptidase_M17_N"/>
    <property type="match status" value="1"/>
</dbReference>
<dbReference type="PRINTS" id="PR00481">
    <property type="entry name" value="LAMNOPPTDASE"/>
</dbReference>
<dbReference type="SUPFAM" id="SSF52949">
    <property type="entry name" value="Macro domain-like"/>
    <property type="match status" value="1"/>
</dbReference>
<dbReference type="SUPFAM" id="SSF53187">
    <property type="entry name" value="Zn-dependent exopeptidases"/>
    <property type="match status" value="1"/>
</dbReference>
<dbReference type="PROSITE" id="PS00631">
    <property type="entry name" value="CYTOSOL_AP"/>
    <property type="match status" value="1"/>
</dbReference>
<name>AMPA_BACC7</name>
<proteinExistence type="inferred from homology"/>
<gene>
    <name evidence="1" type="primary">pepA</name>
    <name type="ordered locus">BCAH187_A5066</name>
</gene>
<sequence>MFYVQKELASHEAVIVALFEEEQTSSFVQELDKAFEGQLQVLLEEKELSTKKKAISKVHSLGKTEVKRYYFVGLGKKESYTTETLRSALGKTFKTLQAAKVQDAAILLDSFVTKKLDAIDVAHIAAEVQGLGTYELQTYKSDKKDRVELEKFTAITAEDAQEIEAALTVGYVHGRATNSARTLVNMPPNVLTATKLAEYAVELAEKYDMDYKVLEKEEMEELGMGALLAVNQGSVEPPKMIALIYKGKEEWTDVIGFVGKGITYDTGGYSLKPREGMVGMKGDMGGAAAVLGAMEIIGELRPEQNVIAVIPSTDNVVSGTAFKPDDVITSMSGKTIEVLNTDAEGRLALADGITYAKKLGANYLIDVATLTGGVIVALGNHTTGAMTNNEELFEQVLEASMETDESIWQLPIFDRDKERVRNSKFADLNNSPGREGHAVMAGTFLSEFAEDTPWVHLDIAGTSESSGAHDLGPAGATGAMVRTLATLVERFGEE</sequence>
<keyword id="KW-0031">Aminopeptidase</keyword>
<keyword id="KW-0963">Cytoplasm</keyword>
<keyword id="KW-0378">Hydrolase</keyword>
<keyword id="KW-0464">Manganese</keyword>
<keyword id="KW-0479">Metal-binding</keyword>
<keyword id="KW-0645">Protease</keyword>
<evidence type="ECO:0000255" key="1">
    <source>
        <dbReference type="HAMAP-Rule" id="MF_00181"/>
    </source>
</evidence>
<accession>B7HUR5</accession>
<organism>
    <name type="scientific">Bacillus cereus (strain AH187)</name>
    <dbReference type="NCBI Taxonomy" id="405534"/>
    <lineage>
        <taxon>Bacteria</taxon>
        <taxon>Bacillati</taxon>
        <taxon>Bacillota</taxon>
        <taxon>Bacilli</taxon>
        <taxon>Bacillales</taxon>
        <taxon>Bacillaceae</taxon>
        <taxon>Bacillus</taxon>
        <taxon>Bacillus cereus group</taxon>
    </lineage>
</organism>
<reference key="1">
    <citation type="submission" date="2008-10" db="EMBL/GenBank/DDBJ databases">
        <title>Genome sequence of Bacillus cereus AH187.</title>
        <authorList>
            <person name="Dodson R.J."/>
            <person name="Durkin A.S."/>
            <person name="Rosovitz M.J."/>
            <person name="Rasko D.A."/>
            <person name="Kolsto A.B."/>
            <person name="Okstad O.A."/>
            <person name="Ravel J."/>
            <person name="Sutton G."/>
        </authorList>
    </citation>
    <scope>NUCLEOTIDE SEQUENCE [LARGE SCALE GENOMIC DNA]</scope>
    <source>
        <strain>AH187</strain>
    </source>
</reference>
<feature type="chain" id="PRO_1000118449" description="Probable cytosol aminopeptidase">
    <location>
        <begin position="1"/>
        <end position="494"/>
    </location>
</feature>
<feature type="active site" evidence="1">
    <location>
        <position position="272"/>
    </location>
</feature>
<feature type="active site" evidence="1">
    <location>
        <position position="346"/>
    </location>
</feature>
<feature type="binding site" evidence="1">
    <location>
        <position position="260"/>
    </location>
    <ligand>
        <name>Mn(2+)</name>
        <dbReference type="ChEBI" id="CHEBI:29035"/>
        <label>2</label>
    </ligand>
</feature>
<feature type="binding site" evidence="1">
    <location>
        <position position="265"/>
    </location>
    <ligand>
        <name>Mn(2+)</name>
        <dbReference type="ChEBI" id="CHEBI:29035"/>
        <label>1</label>
    </ligand>
</feature>
<feature type="binding site" evidence="1">
    <location>
        <position position="265"/>
    </location>
    <ligand>
        <name>Mn(2+)</name>
        <dbReference type="ChEBI" id="CHEBI:29035"/>
        <label>2</label>
    </ligand>
</feature>
<feature type="binding site" evidence="1">
    <location>
        <position position="283"/>
    </location>
    <ligand>
        <name>Mn(2+)</name>
        <dbReference type="ChEBI" id="CHEBI:29035"/>
        <label>2</label>
    </ligand>
</feature>
<feature type="binding site" evidence="1">
    <location>
        <position position="342"/>
    </location>
    <ligand>
        <name>Mn(2+)</name>
        <dbReference type="ChEBI" id="CHEBI:29035"/>
        <label>1</label>
    </ligand>
</feature>
<feature type="binding site" evidence="1">
    <location>
        <position position="344"/>
    </location>
    <ligand>
        <name>Mn(2+)</name>
        <dbReference type="ChEBI" id="CHEBI:29035"/>
        <label>1</label>
    </ligand>
</feature>
<feature type="binding site" evidence="1">
    <location>
        <position position="344"/>
    </location>
    <ligand>
        <name>Mn(2+)</name>
        <dbReference type="ChEBI" id="CHEBI:29035"/>
        <label>2</label>
    </ligand>
</feature>
<protein>
    <recommendedName>
        <fullName evidence="1">Probable cytosol aminopeptidase</fullName>
        <ecNumber evidence="1">3.4.11.1</ecNumber>
    </recommendedName>
    <alternativeName>
        <fullName evidence="1">Leucine aminopeptidase</fullName>
        <shortName evidence="1">LAP</shortName>
        <ecNumber evidence="1">3.4.11.10</ecNumber>
    </alternativeName>
    <alternativeName>
        <fullName evidence="1">Leucyl aminopeptidase</fullName>
    </alternativeName>
</protein>